<evidence type="ECO:0000255" key="1">
    <source>
        <dbReference type="HAMAP-Rule" id="MF_01201"/>
    </source>
</evidence>
<evidence type="ECO:0000305" key="2"/>
<keyword id="KW-0413">Isomerase</keyword>
<keyword id="KW-0663">Pyridoxal phosphate</keyword>
<keyword id="KW-1185">Reference proteome</keyword>
<name>ALR_DEIRA</name>
<feature type="chain" id="PRO_0000114513" description="Alanine racemase">
    <location>
        <begin position="1"/>
        <end position="351"/>
    </location>
</feature>
<feature type="active site" description="Proton acceptor; specific for D-alanine" evidence="1">
    <location>
        <position position="34"/>
    </location>
</feature>
<feature type="active site" description="Proton acceptor; specific for L-alanine" evidence="1">
    <location>
        <position position="248"/>
    </location>
</feature>
<feature type="binding site" evidence="1">
    <location>
        <position position="126"/>
    </location>
    <ligand>
        <name>substrate</name>
    </ligand>
</feature>
<feature type="binding site" evidence="1">
    <location>
        <position position="296"/>
    </location>
    <ligand>
        <name>substrate</name>
    </ligand>
</feature>
<feature type="modified residue" description="N6-(pyridoxal phosphate)lysine" evidence="1">
    <location>
        <position position="34"/>
    </location>
</feature>
<organism>
    <name type="scientific">Deinococcus radiodurans (strain ATCC 13939 / DSM 20539 / JCM 16871 / CCUG 27074 / LMG 4051 / NBRC 15346 / NCIMB 9279 / VKM B-1422 / R1)</name>
    <dbReference type="NCBI Taxonomy" id="243230"/>
    <lineage>
        <taxon>Bacteria</taxon>
        <taxon>Thermotogati</taxon>
        <taxon>Deinococcota</taxon>
        <taxon>Deinococci</taxon>
        <taxon>Deinococcales</taxon>
        <taxon>Deinococcaceae</taxon>
        <taxon>Deinococcus</taxon>
    </lineage>
</organism>
<protein>
    <recommendedName>
        <fullName evidence="1">Alanine racemase</fullName>
        <ecNumber evidence="1">5.1.1.1</ecNumber>
    </recommendedName>
</protein>
<reference key="1">
    <citation type="journal article" date="1999" name="Science">
        <title>Genome sequence of the radioresistant bacterium Deinococcus radiodurans R1.</title>
        <authorList>
            <person name="White O."/>
            <person name="Eisen J.A."/>
            <person name="Heidelberg J.F."/>
            <person name="Hickey E.K."/>
            <person name="Peterson J.D."/>
            <person name="Dodson R.J."/>
            <person name="Haft D.H."/>
            <person name="Gwinn M.L."/>
            <person name="Nelson W.C."/>
            <person name="Richardson D.L."/>
            <person name="Moffat K.S."/>
            <person name="Qin H."/>
            <person name="Jiang L."/>
            <person name="Pamphile W."/>
            <person name="Crosby M."/>
            <person name="Shen M."/>
            <person name="Vamathevan J.J."/>
            <person name="Lam P."/>
            <person name="McDonald L.A."/>
            <person name="Utterback T.R."/>
            <person name="Zalewski C."/>
            <person name="Makarova K.S."/>
            <person name="Aravind L."/>
            <person name="Daly M.J."/>
            <person name="Minton K.W."/>
            <person name="Fleischmann R.D."/>
            <person name="Ketchum K.A."/>
            <person name="Nelson K.E."/>
            <person name="Salzberg S.L."/>
            <person name="Smith H.O."/>
            <person name="Venter J.C."/>
            <person name="Fraser C.M."/>
        </authorList>
    </citation>
    <scope>NUCLEOTIDE SEQUENCE [LARGE SCALE GENOMIC DNA]</scope>
    <source>
        <strain>ATCC 13939 / DSM 20539 / JCM 16871 / CCUG 27074 / LMG 4051 / NBRC 15346 / NCIMB 9279 / VKM B-1422 / R1</strain>
    </source>
</reference>
<sequence>MLPRAVAHISAAALDHNLSALAQRSGTRLLLPVKADAYGHGMELVGRLAAAHPDVWGLAVATPQEAETLARLDLGKPLLLLTPPAPEELGALADLGVRLPVSTLAEVEALPAHAQAHLKVDTGMNRLGARPADAVAVGRALAERGQLEGVYTHFATADEPDLSFALTQLVRFRSVLDALPPVLAHCANGGGVLSFGRIEGMSLARPGLAAYGYVPEHLRHVCALRPVMTVRARVNQLHTAYPGETVSYGALWRAERETGVAVVGMGYADGYPRNATGRAAVLIGGERRPVLGRICMDQMMVDVTGLDVGVGDWAELWGEGDLSVTDVARWGDTIEYEVLTGLGSRVERRVG</sequence>
<gene>
    <name type="primary">alr</name>
    <name type="ordered locus">DR_1086</name>
</gene>
<accession>Q9RVE3</accession>
<dbReference type="EC" id="5.1.1.1" evidence="1"/>
<dbReference type="EMBL" id="AE000513">
    <property type="protein sequence ID" value="AAF10657.1"/>
    <property type="status" value="ALT_INIT"/>
    <property type="molecule type" value="Genomic_DNA"/>
</dbReference>
<dbReference type="PIR" id="H75440">
    <property type="entry name" value="H75440"/>
</dbReference>
<dbReference type="RefSeq" id="NP_294810.1">
    <property type="nucleotide sequence ID" value="NC_001263.1"/>
</dbReference>
<dbReference type="RefSeq" id="WP_027479629.1">
    <property type="nucleotide sequence ID" value="NC_001263.1"/>
</dbReference>
<dbReference type="SMR" id="Q9RVE3"/>
<dbReference type="FunCoup" id="Q9RVE3">
    <property type="interactions" value="304"/>
</dbReference>
<dbReference type="STRING" id="243230.DR_1086"/>
<dbReference type="PaxDb" id="243230-DR_1086"/>
<dbReference type="EnsemblBacteria" id="AAF10657">
    <property type="protein sequence ID" value="AAF10657"/>
    <property type="gene ID" value="DR_1086"/>
</dbReference>
<dbReference type="GeneID" id="69517332"/>
<dbReference type="KEGG" id="dra:DR_1086"/>
<dbReference type="PATRIC" id="fig|243230.17.peg.1281"/>
<dbReference type="eggNOG" id="COG0787">
    <property type="taxonomic scope" value="Bacteria"/>
</dbReference>
<dbReference type="HOGENOM" id="CLU_028393_0_0_0"/>
<dbReference type="InParanoid" id="Q9RVE3"/>
<dbReference type="OrthoDB" id="9813814at2"/>
<dbReference type="UniPathway" id="UPA00042">
    <property type="reaction ID" value="UER00497"/>
</dbReference>
<dbReference type="Proteomes" id="UP000002524">
    <property type="component" value="Chromosome 1"/>
</dbReference>
<dbReference type="GO" id="GO:0005829">
    <property type="term" value="C:cytosol"/>
    <property type="evidence" value="ECO:0000318"/>
    <property type="project" value="GO_Central"/>
</dbReference>
<dbReference type="GO" id="GO:0008784">
    <property type="term" value="F:alanine racemase activity"/>
    <property type="evidence" value="ECO:0000318"/>
    <property type="project" value="GO_Central"/>
</dbReference>
<dbReference type="GO" id="GO:0030170">
    <property type="term" value="F:pyridoxal phosphate binding"/>
    <property type="evidence" value="ECO:0000318"/>
    <property type="project" value="GO_Central"/>
</dbReference>
<dbReference type="GO" id="GO:0030632">
    <property type="term" value="P:D-alanine biosynthetic process"/>
    <property type="evidence" value="ECO:0000318"/>
    <property type="project" value="GO_Central"/>
</dbReference>
<dbReference type="CDD" id="cd00430">
    <property type="entry name" value="PLPDE_III_AR"/>
    <property type="match status" value="1"/>
</dbReference>
<dbReference type="Gene3D" id="3.20.20.10">
    <property type="entry name" value="Alanine racemase"/>
    <property type="match status" value="1"/>
</dbReference>
<dbReference type="Gene3D" id="2.40.37.10">
    <property type="entry name" value="Lyase, Ornithine Decarboxylase, Chain A, domain 1"/>
    <property type="match status" value="1"/>
</dbReference>
<dbReference type="HAMAP" id="MF_01201">
    <property type="entry name" value="Ala_racemase"/>
    <property type="match status" value="1"/>
</dbReference>
<dbReference type="InterPro" id="IPR000821">
    <property type="entry name" value="Ala_racemase"/>
</dbReference>
<dbReference type="InterPro" id="IPR009006">
    <property type="entry name" value="Ala_racemase/Decarboxylase_C"/>
</dbReference>
<dbReference type="InterPro" id="IPR011079">
    <property type="entry name" value="Ala_racemase_C"/>
</dbReference>
<dbReference type="InterPro" id="IPR001608">
    <property type="entry name" value="Ala_racemase_N"/>
</dbReference>
<dbReference type="InterPro" id="IPR020622">
    <property type="entry name" value="Ala_racemase_pyridoxalP-BS"/>
</dbReference>
<dbReference type="InterPro" id="IPR029066">
    <property type="entry name" value="PLP-binding_barrel"/>
</dbReference>
<dbReference type="NCBIfam" id="TIGR00492">
    <property type="entry name" value="alr"/>
    <property type="match status" value="1"/>
</dbReference>
<dbReference type="PANTHER" id="PTHR30511">
    <property type="entry name" value="ALANINE RACEMASE"/>
    <property type="match status" value="1"/>
</dbReference>
<dbReference type="PANTHER" id="PTHR30511:SF0">
    <property type="entry name" value="ALANINE RACEMASE, CATABOLIC-RELATED"/>
    <property type="match status" value="1"/>
</dbReference>
<dbReference type="Pfam" id="PF00842">
    <property type="entry name" value="Ala_racemase_C"/>
    <property type="match status" value="1"/>
</dbReference>
<dbReference type="Pfam" id="PF01168">
    <property type="entry name" value="Ala_racemase_N"/>
    <property type="match status" value="1"/>
</dbReference>
<dbReference type="PRINTS" id="PR00992">
    <property type="entry name" value="ALARACEMASE"/>
</dbReference>
<dbReference type="SMART" id="SM01005">
    <property type="entry name" value="Ala_racemase_C"/>
    <property type="match status" value="1"/>
</dbReference>
<dbReference type="SUPFAM" id="SSF50621">
    <property type="entry name" value="Alanine racemase C-terminal domain-like"/>
    <property type="match status" value="1"/>
</dbReference>
<dbReference type="SUPFAM" id="SSF51419">
    <property type="entry name" value="PLP-binding barrel"/>
    <property type="match status" value="1"/>
</dbReference>
<dbReference type="PROSITE" id="PS00395">
    <property type="entry name" value="ALANINE_RACEMASE"/>
    <property type="match status" value="1"/>
</dbReference>
<comment type="function">
    <text evidence="1">Catalyzes the interconversion of L-alanine and D-alanine. May also act on other amino acids.</text>
</comment>
<comment type="catalytic activity">
    <reaction evidence="1">
        <text>L-alanine = D-alanine</text>
        <dbReference type="Rhea" id="RHEA:20249"/>
        <dbReference type="ChEBI" id="CHEBI:57416"/>
        <dbReference type="ChEBI" id="CHEBI:57972"/>
        <dbReference type="EC" id="5.1.1.1"/>
    </reaction>
</comment>
<comment type="cofactor">
    <cofactor evidence="1">
        <name>pyridoxal 5'-phosphate</name>
        <dbReference type="ChEBI" id="CHEBI:597326"/>
    </cofactor>
</comment>
<comment type="pathway">
    <text evidence="1">Amino-acid biosynthesis; D-alanine biosynthesis; D-alanine from L-alanine: step 1/1.</text>
</comment>
<comment type="similarity">
    <text evidence="1">Belongs to the alanine racemase family.</text>
</comment>
<comment type="sequence caution" evidence="2">
    <conflict type="erroneous initiation">
        <sequence resource="EMBL-CDS" id="AAF10657"/>
    </conflict>
</comment>
<proteinExistence type="inferred from homology"/>